<proteinExistence type="evidence at transcript level"/>
<organism>
    <name type="scientific">Mus musculus</name>
    <name type="common">Mouse</name>
    <dbReference type="NCBI Taxonomy" id="10090"/>
    <lineage>
        <taxon>Eukaryota</taxon>
        <taxon>Metazoa</taxon>
        <taxon>Chordata</taxon>
        <taxon>Craniata</taxon>
        <taxon>Vertebrata</taxon>
        <taxon>Euteleostomi</taxon>
        <taxon>Mammalia</taxon>
        <taxon>Eutheria</taxon>
        <taxon>Euarchontoglires</taxon>
        <taxon>Glires</taxon>
        <taxon>Rodentia</taxon>
        <taxon>Myomorpha</taxon>
        <taxon>Muroidea</taxon>
        <taxon>Muridae</taxon>
        <taxon>Murinae</taxon>
        <taxon>Mus</taxon>
        <taxon>Mus</taxon>
    </lineage>
</organism>
<keyword id="KW-0227">DNA damage</keyword>
<keyword id="KW-0234">DNA repair</keyword>
<keyword id="KW-0238">DNA-binding</keyword>
<keyword id="KW-0539">Nucleus</keyword>
<keyword id="KW-1185">Reference proteome</keyword>
<keyword id="KW-0677">Repeat</keyword>
<keyword id="KW-0694">RNA-binding</keyword>
<accession>Q9JHN8</accession>
<accession>O70347</accession>
<reference key="1">
    <citation type="journal article" date="2003" name="Genome Res.">
        <title>Analysis of the gene-dense major histocompatibility complex class III region and its comparison to mouse.</title>
        <authorList>
            <person name="Xie T."/>
            <person name="Rowen L."/>
            <person name="Aguado B."/>
            <person name="Ahearn M.E."/>
            <person name="Madan A."/>
            <person name="Qin S."/>
            <person name="Campbell R.D."/>
            <person name="Hood L."/>
        </authorList>
    </citation>
    <scope>NUCLEOTIDE SEQUENCE [LARGE SCALE GENOMIC DNA]</scope>
    <source>
        <strain>129</strain>
    </source>
</reference>
<reference key="2">
    <citation type="journal article" date="2004" name="Genome Res.">
        <title>The status, quality, and expansion of the NIH full-length cDNA project: the Mammalian Gene Collection (MGC).</title>
        <authorList>
            <consortium name="The MGC Project Team"/>
        </authorList>
    </citation>
    <scope>NUCLEOTIDE SEQUENCE [LARGE SCALE MRNA]</scope>
    <source>
        <strain>FVB/N</strain>
        <tissue>Kidney</tissue>
    </source>
</reference>
<reference key="3">
    <citation type="submission" date="1998-10" db="EMBL/GenBank/DDBJ databases">
        <title>Conservation and polymorphism of the DOM3Z-RP1 gene pair located at the RD-SKI2W-DOM3Z-RP1 complex of the MHC complement gene cluster.</title>
        <authorList>
            <person name="Yang Z."/>
            <person name="Shen L."/>
            <person name="Yu C.Y."/>
        </authorList>
    </citation>
    <scope>NUCLEOTIDE SEQUENCE [MRNA] OF 14-254</scope>
    <source>
        <strain>BALB/cJ</strain>
        <tissue>Brain</tissue>
    </source>
</reference>
<comment type="function">
    <text evidence="1">DNA-binding protein which is required for efficient transcription-coupled nucleotide excision repair (TC-NER). Acts as part of a TC-NER complex which assembles and interacts with RNA polymerase II (RNAPII) when it stalls at DNA lesions. TC-NER complex subunit UVSSA binds to the GTF2H1/p62 subunit of the TFIIH transcription factor complex, tethering TFIIH to the TC-NER complex. WHR1/STK19 then interacts with the XPD helicase subunit of TFIIH which guides TFIIH to DNA downstream of the stalled RNAPII, ensuring DNA repair. Directly interacts with RNAPII and also binds to downstream DNA. Promotes the timely removal of DNA damage-stalled RNAPII, allowing downstream NER factors to access DNA lesions. Required for monoubiquitination of UVSSA. Regulates repositioning and stabilization of UVSSA within the TC-NER complex. Stimulates ubiquitination of RNAPII complex member RBP1. Also binds to RNA and regulates the expression levels of many mRNAs.</text>
</comment>
<comment type="subunit">
    <text evidence="1">Monomer in solution. Homodimer; when bound to DNA. Component of a transcription-coupled nucleotide excision repair (TC-NER) complex composed of STK19, ERCC6, ERCC8, DDA1, DDB1, ELOF1 and UVSSA which assembles and interacts with the multiprotein RNA polymerase II complex when it stalls at DNA lesions.</text>
</comment>
<comment type="subcellular location">
    <subcellularLocation>
        <location evidence="1">Nucleus</location>
    </subcellularLocation>
</comment>
<comment type="similarity">
    <text evidence="2">Belongs to the STK19 family.</text>
</comment>
<comment type="caution">
    <text evidence="1">Was originally reported to be a serine/threonine-protein kinase. However, later studies have shown that the protein does not have kinase activity and is involved in transcription-coupled nucleotide excision repair.</text>
</comment>
<gene>
    <name evidence="1" type="primary">Whr1</name>
    <name evidence="3" type="synonym">Rp1</name>
    <name evidence="3" type="synonym">Stk19</name>
    <name evidence="1" type="synonym">Twh19</name>
</gene>
<sequence>MNRKRRLLASEAFGVKRRRAPGPVRADPLRTRAGSAREAIEELVKLFPRGLFEDALPPIALRSQVYSLVPDRTVADLQLKELQELGEIRIIQLGFDLDAHGIVFTEDYRTRVLKACDGRPCAGAVQKFLASVLPACGDLSFQQDQMTQTYGFRDPEITQLVNAGVLTVRDAGSWWLAVPGAGRFIKCFVKGRQAVLSMVRKAKYRELALSELLGRRAPLAVRLGLAYHVHDLIGAQLVDCVPTTSGTLLRLPDT</sequence>
<dbReference type="EMBL" id="AF049850">
    <property type="protein sequence ID" value="AAC05280.1"/>
    <property type="molecule type" value="Genomic_DNA"/>
</dbReference>
<dbReference type="EMBL" id="BC022681">
    <property type="protein sequence ID" value="AAH22681.1"/>
    <property type="molecule type" value="mRNA"/>
</dbReference>
<dbReference type="EMBL" id="AF099934">
    <property type="protein sequence ID" value="AAF26174.1"/>
    <property type="molecule type" value="mRNA"/>
</dbReference>
<dbReference type="CCDS" id="CCDS28659.1"/>
<dbReference type="RefSeq" id="NP_062315.1">
    <property type="nucleotide sequence ID" value="NM_019442.3"/>
</dbReference>
<dbReference type="SMR" id="Q9JHN8"/>
<dbReference type="FunCoup" id="Q9JHN8">
    <property type="interactions" value="619"/>
</dbReference>
<dbReference type="STRING" id="10090.ENSMUSP00000076686"/>
<dbReference type="PaxDb" id="10090-ENSMUSP00000076686"/>
<dbReference type="ProteomicsDB" id="257451"/>
<dbReference type="Antibodypedia" id="28162">
    <property type="antibodies" value="184 antibodies from 24 providers"/>
</dbReference>
<dbReference type="DNASU" id="54402"/>
<dbReference type="Ensembl" id="ENSMUST00000077477.12">
    <property type="protein sequence ID" value="ENSMUSP00000076686.6"/>
    <property type="gene ID" value="ENSMUSG00000061207.12"/>
</dbReference>
<dbReference type="GeneID" id="54402"/>
<dbReference type="KEGG" id="mmu:54402"/>
<dbReference type="UCSC" id="uc008cdq.1">
    <property type="organism name" value="mouse"/>
</dbReference>
<dbReference type="AGR" id="MGI:1860085"/>
<dbReference type="CTD" id="54402"/>
<dbReference type="MGI" id="MGI:1860085">
    <property type="gene designation" value="Stk19"/>
</dbReference>
<dbReference type="VEuPathDB" id="HostDB:ENSMUSG00000061207"/>
<dbReference type="eggNOG" id="ENOG502RDW5">
    <property type="taxonomic scope" value="Eukaryota"/>
</dbReference>
<dbReference type="GeneTree" id="ENSGT00390000018295"/>
<dbReference type="HOGENOM" id="CLU_064399_0_1_1"/>
<dbReference type="InParanoid" id="Q9JHN8"/>
<dbReference type="OMA" id="FGWFERY"/>
<dbReference type="OrthoDB" id="10261701at2759"/>
<dbReference type="PhylomeDB" id="Q9JHN8"/>
<dbReference type="TreeFam" id="TF105332"/>
<dbReference type="BioGRID-ORCS" id="54402">
    <property type="hits" value="3 hits in 84 CRISPR screens"/>
</dbReference>
<dbReference type="PRO" id="PR:Q9JHN8"/>
<dbReference type="Proteomes" id="UP000000589">
    <property type="component" value="Chromosome 17"/>
</dbReference>
<dbReference type="RNAct" id="Q9JHN8">
    <property type="molecule type" value="protein"/>
</dbReference>
<dbReference type="Bgee" id="ENSMUSG00000061207">
    <property type="expression patterns" value="Expressed in bone marrow and 81 other cell types or tissues"/>
</dbReference>
<dbReference type="ExpressionAtlas" id="Q9JHN8">
    <property type="expression patterns" value="baseline and differential"/>
</dbReference>
<dbReference type="GO" id="GO:0016607">
    <property type="term" value="C:nuclear speck"/>
    <property type="evidence" value="ECO:0007669"/>
    <property type="project" value="Ensembl"/>
</dbReference>
<dbReference type="GO" id="GO:0005634">
    <property type="term" value="C:nucleus"/>
    <property type="evidence" value="ECO:0000250"/>
    <property type="project" value="UniProtKB"/>
</dbReference>
<dbReference type="GO" id="GO:0008023">
    <property type="term" value="C:transcription elongation factor complex"/>
    <property type="evidence" value="ECO:0007669"/>
    <property type="project" value="Ensembl"/>
</dbReference>
<dbReference type="GO" id="GO:0005524">
    <property type="term" value="F:ATP binding"/>
    <property type="evidence" value="ECO:0007669"/>
    <property type="project" value="UniProtKB-KW"/>
</dbReference>
<dbReference type="GO" id="GO:0003690">
    <property type="term" value="F:double-stranded DNA binding"/>
    <property type="evidence" value="ECO:0000250"/>
    <property type="project" value="UniProtKB"/>
</dbReference>
<dbReference type="GO" id="GO:0003725">
    <property type="term" value="F:double-stranded RNA binding"/>
    <property type="evidence" value="ECO:0007669"/>
    <property type="project" value="Ensembl"/>
</dbReference>
<dbReference type="GO" id="GO:0016301">
    <property type="term" value="F:kinase activity"/>
    <property type="evidence" value="ECO:0007669"/>
    <property type="project" value="UniProtKB-KW"/>
</dbReference>
<dbReference type="GO" id="GO:0042803">
    <property type="term" value="F:protein homodimerization activity"/>
    <property type="evidence" value="ECO:0000250"/>
    <property type="project" value="UniProtKB"/>
</dbReference>
<dbReference type="GO" id="GO:0000993">
    <property type="term" value="F:RNA polymerase II complex binding"/>
    <property type="evidence" value="ECO:0007669"/>
    <property type="project" value="Ensembl"/>
</dbReference>
<dbReference type="GO" id="GO:0062058">
    <property type="term" value="F:transcription factor TFIIH holo complex binding"/>
    <property type="evidence" value="ECO:0007669"/>
    <property type="project" value="Ensembl"/>
</dbReference>
<dbReference type="GO" id="GO:0046579">
    <property type="term" value="P:positive regulation of Ras protein signal transduction"/>
    <property type="evidence" value="ECO:0000250"/>
    <property type="project" value="UniProtKB"/>
</dbReference>
<dbReference type="GO" id="GO:1903518">
    <property type="term" value="P:positive regulation of single strand break repair"/>
    <property type="evidence" value="ECO:0000250"/>
    <property type="project" value="UniProtKB"/>
</dbReference>
<dbReference type="GO" id="GO:0006283">
    <property type="term" value="P:transcription-coupled nucleotide-excision repair"/>
    <property type="evidence" value="ECO:0007669"/>
    <property type="project" value="Ensembl"/>
</dbReference>
<dbReference type="InterPro" id="IPR018865">
    <property type="entry name" value="STK19-like"/>
</dbReference>
<dbReference type="PANTHER" id="PTHR15243">
    <property type="entry name" value="SERINE/THREONINE-PROTEIN KINASE 19"/>
    <property type="match status" value="1"/>
</dbReference>
<dbReference type="PANTHER" id="PTHR15243:SF0">
    <property type="entry name" value="SERINE_THREONINE-PROTEIN KINASE 19"/>
    <property type="match status" value="1"/>
</dbReference>
<dbReference type="Pfam" id="PF10494">
    <property type="entry name" value="Stk19"/>
    <property type="match status" value="1"/>
</dbReference>
<feature type="chain" id="PRO_0000072276" description="Winged helix repair factor 1">
    <location>
        <begin position="1"/>
        <end position="254"/>
    </location>
</feature>
<feature type="region of interest" description="Winged helix domain 1" evidence="1">
    <location>
        <begin position="32"/>
        <end position="104"/>
    </location>
</feature>
<feature type="region of interest" description="Winged helix domain 2" evidence="1">
    <location>
        <begin position="120"/>
        <end position="179"/>
    </location>
</feature>
<feature type="region of interest" description="Winged helix domain 3" evidence="1">
    <location>
        <begin position="180"/>
        <end position="254"/>
    </location>
</feature>
<feature type="short sequence motif" description="Bipartite nuclear localization signal" evidence="1">
    <location>
        <begin position="4"/>
        <end position="21"/>
    </location>
</feature>
<evidence type="ECO:0000250" key="1">
    <source>
        <dbReference type="UniProtKB" id="P49842"/>
    </source>
</evidence>
<evidence type="ECO:0000305" key="2"/>
<evidence type="ECO:0000312" key="3">
    <source>
        <dbReference type="MGI" id="MGI:1860085"/>
    </source>
</evidence>
<protein>
    <recommendedName>
        <fullName evidence="1">Winged helix repair factor 1</fullName>
    </recommendedName>
    <alternativeName>
        <fullName evidence="2">Inactive serine/threonine-protein kinase 19</fullName>
    </alternativeName>
    <alternativeName>
        <fullName evidence="3">Protein RP1</fullName>
    </alternativeName>
    <alternativeName>
        <fullName evidence="1">Tandem winged helix protein formerly known as STK19</fullName>
    </alternativeName>
</protein>
<name>WHR1_MOUSE</name>